<organism>
    <name type="scientific">Conus textile</name>
    <name type="common">Cloth-of-gold cone</name>
    <dbReference type="NCBI Taxonomy" id="6494"/>
    <lineage>
        <taxon>Eukaryota</taxon>
        <taxon>Metazoa</taxon>
        <taxon>Spiralia</taxon>
        <taxon>Lophotrochozoa</taxon>
        <taxon>Mollusca</taxon>
        <taxon>Gastropoda</taxon>
        <taxon>Caenogastropoda</taxon>
        <taxon>Neogastropoda</taxon>
        <taxon>Conoidea</taxon>
        <taxon>Conidae</taxon>
        <taxon>Conus</taxon>
        <taxon>Cylinder</taxon>
    </lineage>
</organism>
<feature type="signal peptide" evidence="2">
    <location>
        <begin position="1"/>
        <end position="22"/>
    </location>
</feature>
<feature type="propeptide" id="PRO_0000034987">
    <location>
        <begin position="23"/>
        <end position="49"/>
    </location>
</feature>
<feature type="peptide" id="PRO_0000034988" description="Conotoxin King-Kong 2" evidence="3">
    <location>
        <begin position="52"/>
        <end position="77"/>
    </location>
</feature>
<feature type="peptide" id="PRO_0000445113" description="Truncated King-Kong 2" evidence="3">
    <location>
        <begin position="52"/>
        <end position="76"/>
    </location>
</feature>
<feature type="modified residue" description="Cysteine amide" evidence="3">
    <location>
        <position position="76"/>
    </location>
</feature>
<feature type="disulfide bond" evidence="1">
    <location>
        <begin position="52"/>
        <end position="67"/>
    </location>
</feature>
<feature type="disulfide bond" evidence="1">
    <location>
        <begin position="59"/>
        <end position="71"/>
    </location>
</feature>
<feature type="disulfide bond" evidence="1">
    <location>
        <begin position="66"/>
        <end position="76"/>
    </location>
</feature>
<comment type="subcellular location">
    <subcellularLocation>
        <location evidence="3">Secreted</location>
    </subcellularLocation>
</comment>
<comment type="tissue specificity">
    <text evidence="5">Expressed by the venom duct.</text>
</comment>
<comment type="domain">
    <text evidence="1">The presence of a 'disulfide through disulfide knot' structurally defines this protein as a knottin.</text>
</comment>
<comment type="domain">
    <text evidence="4">The cysteine framework is VI/VII (C-C-CC-C-C).</text>
</comment>
<comment type="similarity">
    <text evidence="4">Belongs to the conotoxin O1 superfamily.</text>
</comment>
<dbReference type="EMBL" id="X53285">
    <property type="protein sequence ID" value="CAA37379.1"/>
    <property type="molecule type" value="mRNA"/>
</dbReference>
<dbReference type="PIR" id="S12515">
    <property type="entry name" value="S12515"/>
</dbReference>
<dbReference type="SMR" id="P18513"/>
<dbReference type="ConoServer" id="600">
    <property type="toxin name" value="King-Kong 2 precursor"/>
</dbReference>
<dbReference type="GO" id="GO:0005576">
    <property type="term" value="C:extracellular region"/>
    <property type="evidence" value="ECO:0007669"/>
    <property type="project" value="UniProtKB-SubCell"/>
</dbReference>
<dbReference type="GO" id="GO:0008200">
    <property type="term" value="F:ion channel inhibitor activity"/>
    <property type="evidence" value="ECO:0007669"/>
    <property type="project" value="InterPro"/>
</dbReference>
<dbReference type="GO" id="GO:0090729">
    <property type="term" value="F:toxin activity"/>
    <property type="evidence" value="ECO:0007669"/>
    <property type="project" value="UniProtKB-KW"/>
</dbReference>
<dbReference type="InterPro" id="IPR004214">
    <property type="entry name" value="Conotoxin"/>
</dbReference>
<dbReference type="Pfam" id="PF02950">
    <property type="entry name" value="Conotoxin"/>
    <property type="match status" value="1"/>
</dbReference>
<reference key="1">
    <citation type="journal article" date="1990" name="EMBO J.">
        <title>Constant and hypervariable regions in conotoxin propeptides.</title>
        <authorList>
            <person name="Woodward S.R."/>
            <person name="Cruz L.J."/>
            <person name="Olivera B.M."/>
            <person name="Hillyard D.R."/>
        </authorList>
    </citation>
    <scope>NUCLEOTIDE SEQUENCE [MRNA]</scope>
</reference>
<reference key="2">
    <citation type="journal article" date="2012" name="J. Proteome Res.">
        <title>Constrained de novo sequencing of conotoxins.</title>
        <authorList>
            <person name="Bhatia S."/>
            <person name="Kil Y.J."/>
            <person name="Ueberheide B."/>
            <person name="Chait B.T."/>
            <person name="Tayo L."/>
            <person name="Cruz L."/>
            <person name="Lu B."/>
            <person name="Yates J.R. III"/>
            <person name="Bern M."/>
        </authorList>
    </citation>
    <scope>IDENTIFICATION BY MASS SPECTROMETRY</scope>
    <scope>SUBCELLULAR LOCATION</scope>
    <scope>AMIDATION AT CYS-76</scope>
    <source>
        <tissue>Venom</tissue>
    </source>
</reference>
<evidence type="ECO:0000250" key="1">
    <source>
        <dbReference type="UniProtKB" id="Q26443"/>
    </source>
</evidence>
<evidence type="ECO:0000255" key="2"/>
<evidence type="ECO:0000269" key="3">
    <source>
    </source>
</evidence>
<evidence type="ECO:0000305" key="4"/>
<evidence type="ECO:0000305" key="5">
    <source>
    </source>
</evidence>
<evidence type="ECO:0000312" key="6">
    <source>
        <dbReference type="EMBL" id="CAA37379.1"/>
    </source>
</evidence>
<proteinExistence type="evidence at protein level"/>
<name>O1K2_CONTE</name>
<protein>
    <recommendedName>
        <fullName evidence="4">Conotoxin King-Kong 2</fullName>
        <shortName evidence="6">KK-2</shortName>
    </recommendedName>
    <component>
        <recommendedName>
            <fullName evidence="5">Truncated King-Kong 2</fullName>
        </recommendedName>
    </component>
</protein>
<keyword id="KW-0027">Amidation</keyword>
<keyword id="KW-0165">Cleavage on pair of basic residues</keyword>
<keyword id="KW-1015">Disulfide bond</keyword>
<keyword id="KW-0960">Knottin</keyword>
<keyword id="KW-0528">Neurotoxin</keyword>
<keyword id="KW-0964">Secreted</keyword>
<keyword id="KW-0732">Signal</keyword>
<keyword id="KW-0800">Toxin</keyword>
<accession>P18513</accession>
<sequence>MKLTCMMIVAVLFLTAWTFVTADDSGNGLENLFSKAHHEMKNPEASNLNKRCAPFLHPCTFFFPNCCNSYCVQFICL</sequence>